<reference key="1">
    <citation type="journal article" date="2004" name="Toxicon">
        <title>Novel conopeptides of the I-superfamily occur in several clades of cone snails.</title>
        <authorList>
            <person name="Kauferstein S."/>
            <person name="Huys I."/>
            <person name="Kuch U."/>
            <person name="Melaun C."/>
            <person name="Tytgat J."/>
            <person name="Mebs D."/>
        </authorList>
    </citation>
    <scope>NUCLEOTIDE SEQUENCE [MRNA]</scope>
    <source>
        <tissue>Venom duct</tissue>
    </source>
</reference>
<feature type="signal peptide" evidence="3">
    <location>
        <begin position="1"/>
        <end position="26"/>
    </location>
</feature>
<feature type="chain" id="PRO_0000035120" description="Kappa-conotoxin-like 2">
    <location>
        <begin position="27"/>
        <end position="59"/>
    </location>
</feature>
<feature type="propeptide" id="PRO_0000035121" evidence="1">
    <location>
        <begin position="63"/>
        <end position="67"/>
    </location>
</feature>
<feature type="modified residue" description="Phenylalanine amide" evidence="1">
    <location>
        <position position="59"/>
    </location>
</feature>
<feature type="disulfide bond" evidence="2">
    <location>
        <begin position="29"/>
        <end position="43"/>
    </location>
</feature>
<feature type="disulfide bond" evidence="2">
    <location>
        <begin position="36"/>
        <end position="48"/>
    </location>
</feature>
<feature type="disulfide bond" evidence="2">
    <location>
        <begin position="42"/>
        <end position="51"/>
    </location>
</feature>
<feature type="disulfide bond" evidence="2">
    <location>
        <begin position="47"/>
        <end position="55"/>
    </location>
</feature>
<dbReference type="EMBL" id="AJ748255">
    <property type="protein sequence ID" value="CAG38082.1"/>
    <property type="molecule type" value="mRNA"/>
</dbReference>
<dbReference type="ConoServer" id="1086">
    <property type="toxin name" value="Vx11.2 precursor"/>
</dbReference>
<dbReference type="GO" id="GO:0005576">
    <property type="term" value="C:extracellular region"/>
    <property type="evidence" value="ECO:0007669"/>
    <property type="project" value="UniProtKB-SubCell"/>
</dbReference>
<dbReference type="GO" id="GO:0015459">
    <property type="term" value="F:potassium channel regulator activity"/>
    <property type="evidence" value="ECO:0007669"/>
    <property type="project" value="UniProtKB-KW"/>
</dbReference>
<dbReference type="GO" id="GO:0090729">
    <property type="term" value="F:toxin activity"/>
    <property type="evidence" value="ECO:0007669"/>
    <property type="project" value="UniProtKB-KW"/>
</dbReference>
<dbReference type="InterPro" id="IPR013141">
    <property type="entry name" value="Conotoxin-I_CS"/>
</dbReference>
<dbReference type="InterPro" id="IPR020242">
    <property type="entry name" value="Conotoxin_I2"/>
</dbReference>
<dbReference type="Pfam" id="PF17557">
    <property type="entry name" value="Conotoxin_I2"/>
    <property type="match status" value="1"/>
</dbReference>
<dbReference type="PROSITE" id="PS60019">
    <property type="entry name" value="I_CONOTOXIN"/>
    <property type="match status" value="1"/>
</dbReference>
<evidence type="ECO:0000250" key="1"/>
<evidence type="ECO:0000250" key="2">
    <source>
        <dbReference type="UniProtKB" id="Q7Z094"/>
    </source>
</evidence>
<evidence type="ECO:0000255" key="3"/>
<evidence type="ECO:0000305" key="4"/>
<protein>
    <recommendedName>
        <fullName>Kappa-conotoxin-like 2</fullName>
    </recommendedName>
</protein>
<keyword id="KW-0027">Amidation</keyword>
<keyword id="KW-0165">Cleavage on pair of basic residues</keyword>
<keyword id="KW-1015">Disulfide bond</keyword>
<keyword id="KW-0872">Ion channel impairing toxin</keyword>
<keyword id="KW-0528">Neurotoxin</keyword>
<keyword id="KW-0632">Potassium channel impairing toxin</keyword>
<keyword id="KW-0964">Secreted</keyword>
<keyword id="KW-0732">Signal</keyword>
<keyword id="KW-0800">Toxin</keyword>
<keyword id="KW-1220">Voltage-gated potassium channel impairing toxin</keyword>
<sequence>MMFRLTSVSCFLLVIACLNLFQVVLTSRCFPPGIYCTPYLPCCWGICCDTCRNVCHLRFGKRATFQE</sequence>
<proteinExistence type="evidence at transcript level"/>
<organism>
    <name type="scientific">Conus vexillum</name>
    <name type="common">Flag cone</name>
    <dbReference type="NCBI Taxonomy" id="89431"/>
    <lineage>
        <taxon>Eukaryota</taxon>
        <taxon>Metazoa</taxon>
        <taxon>Spiralia</taxon>
        <taxon>Lophotrochozoa</taxon>
        <taxon>Mollusca</taxon>
        <taxon>Gastropoda</taxon>
        <taxon>Caenogastropoda</taxon>
        <taxon>Neogastropoda</taxon>
        <taxon>Conoidea</taxon>
        <taxon>Conidae</taxon>
        <taxon>Conus</taxon>
        <taxon>Rhizoconus</taxon>
    </lineage>
</organism>
<comment type="function">
    <text evidence="1">Inhibits the vertebrate voltage-gated potassium channels Kv1.1/KCNA1 and Kv1.3/KCNA3.</text>
</comment>
<comment type="subcellular location">
    <subcellularLocation>
        <location evidence="1">Secreted</location>
    </subcellularLocation>
</comment>
<comment type="tissue specificity">
    <text>Expressed by the venom duct.</text>
</comment>
<comment type="domain">
    <text>The cysteine framework is XI (C-C-CC-CC-C-C).</text>
</comment>
<comment type="similarity">
    <text evidence="4">Belongs to the conotoxin I2 superfamily.</text>
</comment>
<accession>P69501</accession>
<accession>Q59AA2</accession>
<name>I22_CONVX</name>